<feature type="chain" id="PRO_0000138404" description="UvrABC system protein B">
    <location>
        <begin position="1"/>
        <end position="658"/>
    </location>
</feature>
<feature type="domain" description="Helicase ATP-binding" evidence="1">
    <location>
        <begin position="26"/>
        <end position="414"/>
    </location>
</feature>
<feature type="domain" description="Helicase C-terminal" evidence="1">
    <location>
        <begin position="430"/>
        <end position="592"/>
    </location>
</feature>
<feature type="domain" description="UVR" evidence="1">
    <location>
        <begin position="622"/>
        <end position="658"/>
    </location>
</feature>
<feature type="short sequence motif" description="Beta-hairpin">
    <location>
        <begin position="92"/>
        <end position="115"/>
    </location>
</feature>
<feature type="binding site" evidence="1">
    <location>
        <begin position="39"/>
        <end position="46"/>
    </location>
    <ligand>
        <name>ATP</name>
        <dbReference type="ChEBI" id="CHEBI:30616"/>
    </ligand>
</feature>
<organism>
    <name type="scientific">Listeria monocytogenes serotype 4b (strain F2365)</name>
    <dbReference type="NCBI Taxonomy" id="265669"/>
    <lineage>
        <taxon>Bacteria</taxon>
        <taxon>Bacillati</taxon>
        <taxon>Bacillota</taxon>
        <taxon>Bacilli</taxon>
        <taxon>Bacillales</taxon>
        <taxon>Listeriaceae</taxon>
        <taxon>Listeria</taxon>
    </lineage>
</organism>
<name>UVRB_LISMF</name>
<evidence type="ECO:0000255" key="1">
    <source>
        <dbReference type="HAMAP-Rule" id="MF_00204"/>
    </source>
</evidence>
<reference key="1">
    <citation type="journal article" date="2004" name="Nucleic Acids Res.">
        <title>Whole genome comparisons of serotype 4b and 1/2a strains of the food-borne pathogen Listeria monocytogenes reveal new insights into the core genome components of this species.</title>
        <authorList>
            <person name="Nelson K.E."/>
            <person name="Fouts D.E."/>
            <person name="Mongodin E.F."/>
            <person name="Ravel J."/>
            <person name="DeBoy R.T."/>
            <person name="Kolonay J.F."/>
            <person name="Rasko D.A."/>
            <person name="Angiuoli S.V."/>
            <person name="Gill S.R."/>
            <person name="Paulsen I.T."/>
            <person name="Peterson J.D."/>
            <person name="White O."/>
            <person name="Nelson W.C."/>
            <person name="Nierman W.C."/>
            <person name="Beanan M.J."/>
            <person name="Brinkac L.M."/>
            <person name="Daugherty S.C."/>
            <person name="Dodson R.J."/>
            <person name="Durkin A.S."/>
            <person name="Madupu R."/>
            <person name="Haft D.H."/>
            <person name="Selengut J."/>
            <person name="Van Aken S.E."/>
            <person name="Khouri H.M."/>
            <person name="Fedorova N."/>
            <person name="Forberger H.A."/>
            <person name="Tran B."/>
            <person name="Kathariou S."/>
            <person name="Wonderling L.D."/>
            <person name="Uhlich G.A."/>
            <person name="Bayles D.O."/>
            <person name="Luchansky J.B."/>
            <person name="Fraser C.M."/>
        </authorList>
    </citation>
    <scope>NUCLEOTIDE SEQUENCE [LARGE SCALE GENOMIC DNA]</scope>
    <source>
        <strain>F2365</strain>
    </source>
</reference>
<gene>
    <name evidence="1" type="primary">uvrB</name>
    <name type="ordered locus">LMOf2365_2462</name>
</gene>
<dbReference type="EMBL" id="AE017262">
    <property type="protein sequence ID" value="AAT05227.1"/>
    <property type="molecule type" value="Genomic_DNA"/>
</dbReference>
<dbReference type="RefSeq" id="WP_010959055.1">
    <property type="nucleotide sequence ID" value="NC_002973.6"/>
</dbReference>
<dbReference type="SMR" id="Q71WT9"/>
<dbReference type="KEGG" id="lmf:LMOf2365_2462"/>
<dbReference type="HOGENOM" id="CLU_009621_2_1_9"/>
<dbReference type="GO" id="GO:0005737">
    <property type="term" value="C:cytoplasm"/>
    <property type="evidence" value="ECO:0007669"/>
    <property type="project" value="UniProtKB-SubCell"/>
</dbReference>
<dbReference type="GO" id="GO:0009380">
    <property type="term" value="C:excinuclease repair complex"/>
    <property type="evidence" value="ECO:0007669"/>
    <property type="project" value="InterPro"/>
</dbReference>
<dbReference type="GO" id="GO:0005524">
    <property type="term" value="F:ATP binding"/>
    <property type="evidence" value="ECO:0007669"/>
    <property type="project" value="UniProtKB-UniRule"/>
</dbReference>
<dbReference type="GO" id="GO:0016887">
    <property type="term" value="F:ATP hydrolysis activity"/>
    <property type="evidence" value="ECO:0007669"/>
    <property type="project" value="InterPro"/>
</dbReference>
<dbReference type="GO" id="GO:0003677">
    <property type="term" value="F:DNA binding"/>
    <property type="evidence" value="ECO:0007669"/>
    <property type="project" value="UniProtKB-UniRule"/>
</dbReference>
<dbReference type="GO" id="GO:0009381">
    <property type="term" value="F:excinuclease ABC activity"/>
    <property type="evidence" value="ECO:0007669"/>
    <property type="project" value="UniProtKB-UniRule"/>
</dbReference>
<dbReference type="GO" id="GO:0006289">
    <property type="term" value="P:nucleotide-excision repair"/>
    <property type="evidence" value="ECO:0007669"/>
    <property type="project" value="UniProtKB-UniRule"/>
</dbReference>
<dbReference type="GO" id="GO:0009432">
    <property type="term" value="P:SOS response"/>
    <property type="evidence" value="ECO:0007669"/>
    <property type="project" value="UniProtKB-UniRule"/>
</dbReference>
<dbReference type="CDD" id="cd17916">
    <property type="entry name" value="DEXHc_UvrB"/>
    <property type="match status" value="1"/>
</dbReference>
<dbReference type="CDD" id="cd18790">
    <property type="entry name" value="SF2_C_UvrB"/>
    <property type="match status" value="1"/>
</dbReference>
<dbReference type="Gene3D" id="3.40.50.300">
    <property type="entry name" value="P-loop containing nucleotide triphosphate hydrolases"/>
    <property type="match status" value="3"/>
</dbReference>
<dbReference type="Gene3D" id="4.10.860.10">
    <property type="entry name" value="UVR domain"/>
    <property type="match status" value="1"/>
</dbReference>
<dbReference type="HAMAP" id="MF_00204">
    <property type="entry name" value="UvrB"/>
    <property type="match status" value="1"/>
</dbReference>
<dbReference type="InterPro" id="IPR006935">
    <property type="entry name" value="Helicase/UvrB_N"/>
</dbReference>
<dbReference type="InterPro" id="IPR014001">
    <property type="entry name" value="Helicase_ATP-bd"/>
</dbReference>
<dbReference type="InterPro" id="IPR001650">
    <property type="entry name" value="Helicase_C-like"/>
</dbReference>
<dbReference type="InterPro" id="IPR027417">
    <property type="entry name" value="P-loop_NTPase"/>
</dbReference>
<dbReference type="InterPro" id="IPR001943">
    <property type="entry name" value="UVR_dom"/>
</dbReference>
<dbReference type="InterPro" id="IPR036876">
    <property type="entry name" value="UVR_dom_sf"/>
</dbReference>
<dbReference type="InterPro" id="IPR004807">
    <property type="entry name" value="UvrB"/>
</dbReference>
<dbReference type="InterPro" id="IPR041471">
    <property type="entry name" value="UvrB_inter"/>
</dbReference>
<dbReference type="InterPro" id="IPR024759">
    <property type="entry name" value="UvrB_YAD/RRR_dom"/>
</dbReference>
<dbReference type="NCBIfam" id="NF003673">
    <property type="entry name" value="PRK05298.1"/>
    <property type="match status" value="1"/>
</dbReference>
<dbReference type="NCBIfam" id="TIGR00631">
    <property type="entry name" value="uvrb"/>
    <property type="match status" value="1"/>
</dbReference>
<dbReference type="PANTHER" id="PTHR24029">
    <property type="entry name" value="UVRABC SYSTEM PROTEIN B"/>
    <property type="match status" value="1"/>
</dbReference>
<dbReference type="PANTHER" id="PTHR24029:SF0">
    <property type="entry name" value="UVRABC SYSTEM PROTEIN B"/>
    <property type="match status" value="1"/>
</dbReference>
<dbReference type="Pfam" id="PF00271">
    <property type="entry name" value="Helicase_C"/>
    <property type="match status" value="1"/>
</dbReference>
<dbReference type="Pfam" id="PF04851">
    <property type="entry name" value="ResIII"/>
    <property type="match status" value="1"/>
</dbReference>
<dbReference type="Pfam" id="PF02151">
    <property type="entry name" value="UVR"/>
    <property type="match status" value="1"/>
</dbReference>
<dbReference type="Pfam" id="PF12344">
    <property type="entry name" value="UvrB"/>
    <property type="match status" value="1"/>
</dbReference>
<dbReference type="Pfam" id="PF17757">
    <property type="entry name" value="UvrB_inter"/>
    <property type="match status" value="1"/>
</dbReference>
<dbReference type="SMART" id="SM00487">
    <property type="entry name" value="DEXDc"/>
    <property type="match status" value="1"/>
</dbReference>
<dbReference type="SMART" id="SM00490">
    <property type="entry name" value="HELICc"/>
    <property type="match status" value="1"/>
</dbReference>
<dbReference type="SUPFAM" id="SSF46600">
    <property type="entry name" value="C-terminal UvrC-binding domain of UvrB"/>
    <property type="match status" value="1"/>
</dbReference>
<dbReference type="SUPFAM" id="SSF52540">
    <property type="entry name" value="P-loop containing nucleoside triphosphate hydrolases"/>
    <property type="match status" value="2"/>
</dbReference>
<dbReference type="PROSITE" id="PS51192">
    <property type="entry name" value="HELICASE_ATP_BIND_1"/>
    <property type="match status" value="1"/>
</dbReference>
<dbReference type="PROSITE" id="PS51194">
    <property type="entry name" value="HELICASE_CTER"/>
    <property type="match status" value="1"/>
</dbReference>
<dbReference type="PROSITE" id="PS50151">
    <property type="entry name" value="UVR"/>
    <property type="match status" value="1"/>
</dbReference>
<sequence length="658" mass="75561">MKDKFELVSKYSPQGDQPRAIEQLVAGLKKGLKHQTLLGATGTGKTFTVSNVIQEVNKPTLVMAHNKTLAGQLYSEFKEFFPNNAVEYFVSYYDYYQPEAYVPQSDTYIEKDASINDEIDKLRHSATAALFERRDVIIIASVSCIYGLGSPIEYGEMLVSLRVGMEISRDQLLRKLVDIQYDRNDIDFQRGRFRVRGDVVEIFPASRDEHCMRIEFFGDEIERIREVDALTGEIIGEREHVSIFPASHFVTRPDIMKKAIVNIKAELEDRLQVLRADNKLLEAQRLEQRTNYDLEMMEEMGYCSGIENYSRHLSLRPAGVTPYTLLDYFPDDFQMVIDESHVTMPQIRGMFNGDQARKQMLVDHGFRLPSALDNRPLRLEEFEKHINQIMFISATPGPYELEKNPDVIEQIIRPTGLLDPIVEIRPIQGQIDDLMDEINNRVEKNERVLITTLTKKMSEDLTNYLKEAGVKVQYLHSEVKTLERIEIIRDLRLGVYDVIVGINLLREGIDLPEVSLVAILDADKEGFLRSERSLIQTMGRAARNENGRVIMYADKMTDSMRNSIGETERRRKIQIEYNEKHGITPKTIKKEIRGIIAATSAADEREAVKQHDLSKMSKKERDVFIEGMEHEMKEAAKALDFERAAELRDALLEIKAEG</sequence>
<comment type="function">
    <text evidence="1">The UvrABC repair system catalyzes the recognition and processing of DNA lesions. A damage recognition complex composed of 2 UvrA and 2 UvrB subunits scans DNA for abnormalities. Upon binding of the UvrA(2)B(2) complex to a putative damaged site, the DNA wraps around one UvrB monomer. DNA wrap is dependent on ATP binding by UvrB and probably causes local melting of the DNA helix, facilitating insertion of UvrB beta-hairpin between the DNA strands. Then UvrB probes one DNA strand for the presence of a lesion. If a lesion is found the UvrA subunits dissociate and the UvrB-DNA preincision complex is formed. This complex is subsequently bound by UvrC and the second UvrB is released. If no lesion is found, the DNA wraps around the other UvrB subunit that will check the other stand for damage.</text>
</comment>
<comment type="subunit">
    <text evidence="1">Forms a heterotetramer with UvrA during the search for lesions. Interacts with UvrC in an incision complex.</text>
</comment>
<comment type="subcellular location">
    <subcellularLocation>
        <location evidence="1">Cytoplasm</location>
    </subcellularLocation>
</comment>
<comment type="domain">
    <text evidence="1">The beta-hairpin motif is involved in DNA binding.</text>
</comment>
<comment type="similarity">
    <text evidence="1">Belongs to the UvrB family.</text>
</comment>
<protein>
    <recommendedName>
        <fullName evidence="1">UvrABC system protein B</fullName>
        <shortName evidence="1">Protein UvrB</shortName>
    </recommendedName>
    <alternativeName>
        <fullName evidence="1">Excinuclease ABC subunit B</fullName>
    </alternativeName>
</protein>
<accession>Q71WT9</accession>
<keyword id="KW-0067">ATP-binding</keyword>
<keyword id="KW-0963">Cytoplasm</keyword>
<keyword id="KW-0227">DNA damage</keyword>
<keyword id="KW-0228">DNA excision</keyword>
<keyword id="KW-0234">DNA repair</keyword>
<keyword id="KW-0267">Excision nuclease</keyword>
<keyword id="KW-0547">Nucleotide-binding</keyword>
<keyword id="KW-0742">SOS response</keyword>
<proteinExistence type="inferred from homology"/>